<name>RL19_HAHCH</name>
<evidence type="ECO:0000255" key="1">
    <source>
        <dbReference type="HAMAP-Rule" id="MF_00402"/>
    </source>
</evidence>
<evidence type="ECO:0000305" key="2"/>
<reference key="1">
    <citation type="journal article" date="2005" name="Nucleic Acids Res.">
        <title>Genomic blueprint of Hahella chejuensis, a marine microbe producing an algicidal agent.</title>
        <authorList>
            <person name="Jeong H."/>
            <person name="Yim J.H."/>
            <person name="Lee C."/>
            <person name="Choi S.-H."/>
            <person name="Park Y.K."/>
            <person name="Yoon S.H."/>
            <person name="Hur C.-G."/>
            <person name="Kang H.-Y."/>
            <person name="Kim D."/>
            <person name="Lee H.H."/>
            <person name="Park K.H."/>
            <person name="Park S.-H."/>
            <person name="Park H.-S."/>
            <person name="Lee H.K."/>
            <person name="Oh T.K."/>
            <person name="Kim J.F."/>
        </authorList>
    </citation>
    <scope>NUCLEOTIDE SEQUENCE [LARGE SCALE GENOMIC DNA]</scope>
    <source>
        <strain>KCTC 2396</strain>
    </source>
</reference>
<accession>Q2SL55</accession>
<keyword id="KW-1185">Reference proteome</keyword>
<keyword id="KW-0687">Ribonucleoprotein</keyword>
<keyword id="KW-0689">Ribosomal protein</keyword>
<dbReference type="EMBL" id="CP000155">
    <property type="protein sequence ID" value="ABC28619.1"/>
    <property type="molecule type" value="Genomic_DNA"/>
</dbReference>
<dbReference type="RefSeq" id="WP_011395691.1">
    <property type="nucleotide sequence ID" value="NC_007645.1"/>
</dbReference>
<dbReference type="SMR" id="Q2SL55"/>
<dbReference type="STRING" id="349521.HCH_01775"/>
<dbReference type="KEGG" id="hch:HCH_01775"/>
<dbReference type="eggNOG" id="COG0335">
    <property type="taxonomic scope" value="Bacteria"/>
</dbReference>
<dbReference type="HOGENOM" id="CLU_103507_2_2_6"/>
<dbReference type="OrthoDB" id="9803541at2"/>
<dbReference type="Proteomes" id="UP000000238">
    <property type="component" value="Chromosome"/>
</dbReference>
<dbReference type="GO" id="GO:0022625">
    <property type="term" value="C:cytosolic large ribosomal subunit"/>
    <property type="evidence" value="ECO:0007669"/>
    <property type="project" value="TreeGrafter"/>
</dbReference>
<dbReference type="GO" id="GO:0003735">
    <property type="term" value="F:structural constituent of ribosome"/>
    <property type="evidence" value="ECO:0007669"/>
    <property type="project" value="InterPro"/>
</dbReference>
<dbReference type="GO" id="GO:0006412">
    <property type="term" value="P:translation"/>
    <property type="evidence" value="ECO:0007669"/>
    <property type="project" value="UniProtKB-UniRule"/>
</dbReference>
<dbReference type="FunFam" id="2.30.30.790:FF:000001">
    <property type="entry name" value="50S ribosomal protein L19"/>
    <property type="match status" value="1"/>
</dbReference>
<dbReference type="Gene3D" id="2.30.30.790">
    <property type="match status" value="1"/>
</dbReference>
<dbReference type="HAMAP" id="MF_00402">
    <property type="entry name" value="Ribosomal_bL19"/>
    <property type="match status" value="1"/>
</dbReference>
<dbReference type="InterPro" id="IPR001857">
    <property type="entry name" value="Ribosomal_bL19"/>
</dbReference>
<dbReference type="InterPro" id="IPR038657">
    <property type="entry name" value="Ribosomal_bL19_sf"/>
</dbReference>
<dbReference type="InterPro" id="IPR008991">
    <property type="entry name" value="Translation_prot_SH3-like_sf"/>
</dbReference>
<dbReference type="NCBIfam" id="TIGR01024">
    <property type="entry name" value="rplS_bact"/>
    <property type="match status" value="1"/>
</dbReference>
<dbReference type="PANTHER" id="PTHR15680:SF9">
    <property type="entry name" value="LARGE RIBOSOMAL SUBUNIT PROTEIN BL19M"/>
    <property type="match status" value="1"/>
</dbReference>
<dbReference type="PANTHER" id="PTHR15680">
    <property type="entry name" value="RIBOSOMAL PROTEIN L19"/>
    <property type="match status" value="1"/>
</dbReference>
<dbReference type="Pfam" id="PF01245">
    <property type="entry name" value="Ribosomal_L19"/>
    <property type="match status" value="1"/>
</dbReference>
<dbReference type="PIRSF" id="PIRSF002191">
    <property type="entry name" value="Ribosomal_L19"/>
    <property type="match status" value="1"/>
</dbReference>
<dbReference type="PRINTS" id="PR00061">
    <property type="entry name" value="RIBOSOMALL19"/>
</dbReference>
<dbReference type="SUPFAM" id="SSF50104">
    <property type="entry name" value="Translation proteins SH3-like domain"/>
    <property type="match status" value="1"/>
</dbReference>
<sequence>MSSKNTIISQLEAEQMSKEIPEFAPGDTVTVSVKVVEGSRERLQAFEGVVIAKRNRGLNSSFTVRKVSYGVGVERTFQTHSRLVDSINVKRRGDVRKAKLYHLRDLSGKAARIKEKLD</sequence>
<comment type="function">
    <text evidence="1">This protein is located at the 30S-50S ribosomal subunit interface and may play a role in the structure and function of the aminoacyl-tRNA binding site.</text>
</comment>
<comment type="similarity">
    <text evidence="1">Belongs to the bacterial ribosomal protein bL19 family.</text>
</comment>
<feature type="chain" id="PRO_0000252511" description="Large ribosomal subunit protein bL19">
    <location>
        <begin position="1"/>
        <end position="118"/>
    </location>
</feature>
<proteinExistence type="inferred from homology"/>
<protein>
    <recommendedName>
        <fullName evidence="1">Large ribosomal subunit protein bL19</fullName>
    </recommendedName>
    <alternativeName>
        <fullName evidence="2">50S ribosomal protein L19</fullName>
    </alternativeName>
</protein>
<gene>
    <name evidence="1" type="primary">rplS</name>
    <name type="ordered locus">HCH_01775</name>
</gene>
<organism>
    <name type="scientific">Hahella chejuensis (strain KCTC 2396)</name>
    <dbReference type="NCBI Taxonomy" id="349521"/>
    <lineage>
        <taxon>Bacteria</taxon>
        <taxon>Pseudomonadati</taxon>
        <taxon>Pseudomonadota</taxon>
        <taxon>Gammaproteobacteria</taxon>
        <taxon>Oceanospirillales</taxon>
        <taxon>Hahellaceae</taxon>
        <taxon>Hahella</taxon>
    </lineage>
</organism>